<feature type="chain" id="PRO_0000163344" description="Ribosome maturation factor RimM">
    <location>
        <begin position="1"/>
        <end position="165"/>
    </location>
</feature>
<feature type="domain" description="PRC barrel" evidence="1">
    <location>
        <begin position="94"/>
        <end position="165"/>
    </location>
</feature>
<organism>
    <name type="scientific">Rickettsia typhi (strain ATCC VR-144 / Wilmington)</name>
    <dbReference type="NCBI Taxonomy" id="257363"/>
    <lineage>
        <taxon>Bacteria</taxon>
        <taxon>Pseudomonadati</taxon>
        <taxon>Pseudomonadota</taxon>
        <taxon>Alphaproteobacteria</taxon>
        <taxon>Rickettsiales</taxon>
        <taxon>Rickettsiaceae</taxon>
        <taxon>Rickettsieae</taxon>
        <taxon>Rickettsia</taxon>
        <taxon>typhus group</taxon>
    </lineage>
</organism>
<keyword id="KW-0143">Chaperone</keyword>
<keyword id="KW-0963">Cytoplasm</keyword>
<keyword id="KW-0690">Ribosome biogenesis</keyword>
<keyword id="KW-0698">rRNA processing</keyword>
<name>RIMM_RICTY</name>
<dbReference type="EMBL" id="AE017197">
    <property type="protein sequence ID" value="AAU03817.1"/>
    <property type="molecule type" value="Genomic_DNA"/>
</dbReference>
<dbReference type="RefSeq" id="WP_011190801.1">
    <property type="nucleotide sequence ID" value="NC_006142.1"/>
</dbReference>
<dbReference type="SMR" id="Q68X25"/>
<dbReference type="KEGG" id="rty:RT0337"/>
<dbReference type="eggNOG" id="COG0806">
    <property type="taxonomic scope" value="Bacteria"/>
</dbReference>
<dbReference type="HOGENOM" id="CLU_077636_0_1_5"/>
<dbReference type="OrthoDB" id="9788191at2"/>
<dbReference type="Proteomes" id="UP000000604">
    <property type="component" value="Chromosome"/>
</dbReference>
<dbReference type="GO" id="GO:0005737">
    <property type="term" value="C:cytoplasm"/>
    <property type="evidence" value="ECO:0007669"/>
    <property type="project" value="UniProtKB-SubCell"/>
</dbReference>
<dbReference type="GO" id="GO:0005840">
    <property type="term" value="C:ribosome"/>
    <property type="evidence" value="ECO:0007669"/>
    <property type="project" value="InterPro"/>
</dbReference>
<dbReference type="GO" id="GO:0043022">
    <property type="term" value="F:ribosome binding"/>
    <property type="evidence" value="ECO:0007669"/>
    <property type="project" value="InterPro"/>
</dbReference>
<dbReference type="GO" id="GO:0042274">
    <property type="term" value="P:ribosomal small subunit biogenesis"/>
    <property type="evidence" value="ECO:0007669"/>
    <property type="project" value="UniProtKB-UniRule"/>
</dbReference>
<dbReference type="GO" id="GO:0006364">
    <property type="term" value="P:rRNA processing"/>
    <property type="evidence" value="ECO:0007669"/>
    <property type="project" value="UniProtKB-UniRule"/>
</dbReference>
<dbReference type="Gene3D" id="2.30.30.240">
    <property type="entry name" value="PRC-barrel domain"/>
    <property type="match status" value="1"/>
</dbReference>
<dbReference type="Gene3D" id="2.40.30.60">
    <property type="entry name" value="RimM"/>
    <property type="match status" value="1"/>
</dbReference>
<dbReference type="HAMAP" id="MF_00014">
    <property type="entry name" value="Ribosome_mat_RimM"/>
    <property type="match status" value="1"/>
</dbReference>
<dbReference type="InterPro" id="IPR027275">
    <property type="entry name" value="PRC-brl_dom"/>
</dbReference>
<dbReference type="InterPro" id="IPR011033">
    <property type="entry name" value="PRC_barrel-like_sf"/>
</dbReference>
<dbReference type="InterPro" id="IPR011961">
    <property type="entry name" value="RimM"/>
</dbReference>
<dbReference type="InterPro" id="IPR002676">
    <property type="entry name" value="RimM_N"/>
</dbReference>
<dbReference type="InterPro" id="IPR036976">
    <property type="entry name" value="RimM_N_sf"/>
</dbReference>
<dbReference type="InterPro" id="IPR009000">
    <property type="entry name" value="Transl_B-barrel_sf"/>
</dbReference>
<dbReference type="NCBIfam" id="TIGR02273">
    <property type="entry name" value="16S_RimM"/>
    <property type="match status" value="1"/>
</dbReference>
<dbReference type="PANTHER" id="PTHR33692">
    <property type="entry name" value="RIBOSOME MATURATION FACTOR RIMM"/>
    <property type="match status" value="1"/>
</dbReference>
<dbReference type="PANTHER" id="PTHR33692:SF1">
    <property type="entry name" value="RIBOSOME MATURATION FACTOR RIMM"/>
    <property type="match status" value="1"/>
</dbReference>
<dbReference type="Pfam" id="PF05239">
    <property type="entry name" value="PRC"/>
    <property type="match status" value="1"/>
</dbReference>
<dbReference type="Pfam" id="PF01782">
    <property type="entry name" value="RimM"/>
    <property type="match status" value="1"/>
</dbReference>
<dbReference type="SUPFAM" id="SSF50346">
    <property type="entry name" value="PRC-barrel domain"/>
    <property type="match status" value="1"/>
</dbReference>
<dbReference type="SUPFAM" id="SSF50447">
    <property type="entry name" value="Translation proteins"/>
    <property type="match status" value="1"/>
</dbReference>
<sequence>MNSLENLILIGIIKSCHGIQGHVILRSFTEPATKILERNLVNESGADIRIKLISQNAKGELICTFNDITTRNEAENLKGYKIFCLRTSLPELEEDEFYIADLNHLRILDQYNKEIGKIKNILNFGAGDIIEIEFLDKTTKLLPFNKEFFPTITKDYVILNYQTKV</sequence>
<reference key="1">
    <citation type="journal article" date="2004" name="J. Bacteriol.">
        <title>Complete genome sequence of Rickettsia typhi and comparison with sequences of other Rickettsiae.</title>
        <authorList>
            <person name="McLeod M.P."/>
            <person name="Qin X."/>
            <person name="Karpathy S.E."/>
            <person name="Gioia J."/>
            <person name="Highlander S.K."/>
            <person name="Fox G.E."/>
            <person name="McNeill T.Z."/>
            <person name="Jiang H."/>
            <person name="Muzny D."/>
            <person name="Jacob L.S."/>
            <person name="Hawes A.C."/>
            <person name="Sodergren E."/>
            <person name="Gill R."/>
            <person name="Hume J."/>
            <person name="Morgan M."/>
            <person name="Fan G."/>
            <person name="Amin A.G."/>
            <person name="Gibbs R.A."/>
            <person name="Hong C."/>
            <person name="Yu X.-J."/>
            <person name="Walker D.H."/>
            <person name="Weinstock G.M."/>
        </authorList>
    </citation>
    <scope>NUCLEOTIDE SEQUENCE [LARGE SCALE GENOMIC DNA]</scope>
    <source>
        <strain>ATCC VR-144 / Wilmington</strain>
    </source>
</reference>
<evidence type="ECO:0000255" key="1">
    <source>
        <dbReference type="HAMAP-Rule" id="MF_00014"/>
    </source>
</evidence>
<protein>
    <recommendedName>
        <fullName evidence="1">Ribosome maturation factor RimM</fullName>
    </recommendedName>
</protein>
<proteinExistence type="inferred from homology"/>
<comment type="function">
    <text evidence="1">An accessory protein needed during the final step in the assembly of 30S ribosomal subunit, possibly for assembly of the head region. Essential for efficient processing of 16S rRNA. May be needed both before and after RbfA during the maturation of 16S rRNA. It has affinity for free ribosomal 30S subunits but not for 70S ribosomes.</text>
</comment>
<comment type="subunit">
    <text evidence="1">Binds ribosomal protein uS19.</text>
</comment>
<comment type="subcellular location">
    <subcellularLocation>
        <location evidence="1">Cytoplasm</location>
    </subcellularLocation>
</comment>
<comment type="domain">
    <text evidence="1">The PRC barrel domain binds ribosomal protein uS19.</text>
</comment>
<comment type="similarity">
    <text evidence="1">Belongs to the RimM family.</text>
</comment>
<accession>Q68X25</accession>
<gene>
    <name evidence="1" type="primary">rimM</name>
    <name type="ordered locus">RT0337</name>
</gene>